<accession>Q10SX6</accession>
<accession>A0A0P0VS08</accession>
<accession>Q8H7Q4</accession>
<protein>
    <recommendedName>
        <fullName>Arsenate reductase 2.2</fullName>
        <shortName>OsACR2.2</shortName>
        <ecNumber>1.20.4.1</ecNumber>
    </recommendedName>
    <alternativeName>
        <fullName>Dual specificity phosphatase CDC25.2</fullName>
    </alternativeName>
    <alternativeName>
        <fullName>Sulfurtransferase 21</fullName>
        <shortName>OsStr21</shortName>
    </alternativeName>
</protein>
<organism>
    <name type="scientific">Oryza sativa subsp. japonica</name>
    <name type="common">Rice</name>
    <dbReference type="NCBI Taxonomy" id="39947"/>
    <lineage>
        <taxon>Eukaryota</taxon>
        <taxon>Viridiplantae</taxon>
        <taxon>Streptophyta</taxon>
        <taxon>Embryophyta</taxon>
        <taxon>Tracheophyta</taxon>
        <taxon>Spermatophyta</taxon>
        <taxon>Magnoliopsida</taxon>
        <taxon>Liliopsida</taxon>
        <taxon>Poales</taxon>
        <taxon>Poaceae</taxon>
        <taxon>BOP clade</taxon>
        <taxon>Oryzoideae</taxon>
        <taxon>Oryzeae</taxon>
        <taxon>Oryzinae</taxon>
        <taxon>Oryza</taxon>
        <taxon>Oryza sativa</taxon>
    </lineage>
</organism>
<proteinExistence type="evidence at protein level"/>
<dbReference type="EC" id="1.20.4.1"/>
<dbReference type="EMBL" id="AY860058">
    <property type="protein sequence ID" value="AAX54895.1"/>
    <property type="molecule type" value="mRNA"/>
</dbReference>
<dbReference type="EMBL" id="AC113930">
    <property type="protein sequence ID" value="AAN62781.1"/>
    <property type="status" value="ALT_SEQ"/>
    <property type="molecule type" value="Genomic_DNA"/>
</dbReference>
<dbReference type="EMBL" id="DP000009">
    <property type="protein sequence ID" value="ABF93560.1"/>
    <property type="molecule type" value="Genomic_DNA"/>
</dbReference>
<dbReference type="EMBL" id="AP008209">
    <property type="protein sequence ID" value="BAF10612.1"/>
    <property type="molecule type" value="Genomic_DNA"/>
</dbReference>
<dbReference type="EMBL" id="AP014959">
    <property type="protein sequence ID" value="BAS81892.1"/>
    <property type="molecule type" value="Genomic_DNA"/>
</dbReference>
<dbReference type="EMBL" id="AK102520">
    <property type="protein sequence ID" value="BAG95596.1"/>
    <property type="molecule type" value="mRNA"/>
</dbReference>
<dbReference type="RefSeq" id="XP_015628914.1">
    <property type="nucleotide sequence ID" value="XM_015773428.1"/>
</dbReference>
<dbReference type="SMR" id="Q10SX6"/>
<dbReference type="FunCoup" id="Q10SX6">
    <property type="interactions" value="404"/>
</dbReference>
<dbReference type="STRING" id="39947.Q10SX6"/>
<dbReference type="PaxDb" id="39947-Q10SX6"/>
<dbReference type="EnsemblPlants" id="Os03t0108000-01">
    <property type="protein sequence ID" value="Os03t0108000-01"/>
    <property type="gene ID" value="Os03g0108000"/>
</dbReference>
<dbReference type="Gramene" id="Os03t0108000-01">
    <property type="protein sequence ID" value="Os03t0108000-01"/>
    <property type="gene ID" value="Os03g0108000"/>
</dbReference>
<dbReference type="KEGG" id="dosa:Os03g0108000"/>
<dbReference type="eggNOG" id="KOG3772">
    <property type="taxonomic scope" value="Eukaryota"/>
</dbReference>
<dbReference type="HOGENOM" id="CLU_107716_2_0_1"/>
<dbReference type="InParanoid" id="Q10SX6"/>
<dbReference type="OMA" id="RGGFTQW"/>
<dbReference type="OrthoDB" id="102559at2759"/>
<dbReference type="BRENDA" id="1.20.99.1">
    <property type="organism ID" value="4460"/>
</dbReference>
<dbReference type="SABIO-RK" id="Q10SX6"/>
<dbReference type="Proteomes" id="UP000000763">
    <property type="component" value="Chromosome 3"/>
</dbReference>
<dbReference type="Proteomes" id="UP000059680">
    <property type="component" value="Chromosome 3"/>
</dbReference>
<dbReference type="GO" id="GO:0005737">
    <property type="term" value="C:cytoplasm"/>
    <property type="evidence" value="ECO:0000318"/>
    <property type="project" value="GO_Central"/>
</dbReference>
<dbReference type="GO" id="GO:0005634">
    <property type="term" value="C:nucleus"/>
    <property type="evidence" value="ECO:0000318"/>
    <property type="project" value="GO_Central"/>
</dbReference>
<dbReference type="GO" id="GO:0008794">
    <property type="term" value="F:arsenate reductase (glutaredoxin) activity"/>
    <property type="evidence" value="ECO:0000314"/>
    <property type="project" value="UniProtKB"/>
</dbReference>
<dbReference type="GO" id="GO:0016791">
    <property type="term" value="F:phosphatase activity"/>
    <property type="evidence" value="ECO:0000314"/>
    <property type="project" value="UniProtKB"/>
</dbReference>
<dbReference type="GO" id="GO:0004725">
    <property type="term" value="F:protein tyrosine phosphatase activity"/>
    <property type="evidence" value="ECO:0000318"/>
    <property type="project" value="GO_Central"/>
</dbReference>
<dbReference type="FunFam" id="3.40.250.10:FF:000037">
    <property type="entry name" value="Dual-specificity phosphatase CDC25"/>
    <property type="match status" value="1"/>
</dbReference>
<dbReference type="Gene3D" id="3.40.250.10">
    <property type="entry name" value="Rhodanese-like domain"/>
    <property type="match status" value="1"/>
</dbReference>
<dbReference type="InterPro" id="IPR001763">
    <property type="entry name" value="Rhodanese-like_dom"/>
</dbReference>
<dbReference type="InterPro" id="IPR036873">
    <property type="entry name" value="Rhodanese-like_dom_sf"/>
</dbReference>
<dbReference type="PANTHER" id="PTHR10828:SF38">
    <property type="entry name" value="ARSENICAL-RESISTANCE PROTEIN 2-RELATED"/>
    <property type="match status" value="1"/>
</dbReference>
<dbReference type="PANTHER" id="PTHR10828">
    <property type="entry name" value="M-PHASE INDUCER PHOSPHATASE DUAL SPECIFICITY PHOSPHATASE CDC25"/>
    <property type="match status" value="1"/>
</dbReference>
<dbReference type="Pfam" id="PF00581">
    <property type="entry name" value="Rhodanese"/>
    <property type="match status" value="1"/>
</dbReference>
<dbReference type="SUPFAM" id="SSF52821">
    <property type="entry name" value="Rhodanese/Cell cycle control phosphatase"/>
    <property type="match status" value="1"/>
</dbReference>
<dbReference type="PROSITE" id="PS50206">
    <property type="entry name" value="RHODANESE_3"/>
    <property type="match status" value="1"/>
</dbReference>
<keyword id="KW-0560">Oxidoreductase</keyword>
<keyword id="KW-1185">Reference proteome</keyword>
<sequence>MARGVSYVSAAQLVPMLRDPRIAVVDVRDEERIYDAHIAGSHHYASDSFGERLPELAQATKGKETLVFHCALSKVRGPSCAQMYLDYLSEADEDSDVKNIMVLERGFNGWELSGRPVCRCKDAPCKGVCS</sequence>
<feature type="chain" id="PRO_0000416541" description="Arsenate reductase 2.2">
    <location>
        <begin position="1"/>
        <end position="130"/>
    </location>
</feature>
<feature type="domain" description="Rhodanese" evidence="1">
    <location>
        <begin position="18"/>
        <end position="119"/>
    </location>
</feature>
<feature type="active site" description="Cysteine persulfide intermediate" evidence="1">
    <location>
        <position position="70"/>
    </location>
</feature>
<feature type="mutagenesis site" description="Loss of phosphatase activity. Decreases arsenate reductase catalytic efficiency 5-fold." evidence="2">
    <original>C</original>
    <variation>S</variation>
    <location>
        <position position="70"/>
    </location>
</feature>
<comment type="function">
    <text evidence="2">Possesses arsenate reductase activity in vitro. Catalyzes the reduction of arsenate [As(V)] to arsenite [As(III)]. May play a role in arsenic retention in roots.</text>
</comment>
<comment type="function">
    <text evidence="2">Possesses phosphatase activity towards p-nitrophenyl phosphate in vitro.</text>
</comment>
<comment type="catalytic activity">
    <reaction evidence="2">
        <text>[glutaredoxin]-dithiol + arsenate + glutathione + H(+) = glutathionyl-S-S-[glutaredoxin] + arsenite + H2O</text>
        <dbReference type="Rhea" id="RHEA:22016"/>
        <dbReference type="Rhea" id="RHEA-COMP:10729"/>
        <dbReference type="Rhea" id="RHEA-COMP:17668"/>
        <dbReference type="ChEBI" id="CHEBI:15377"/>
        <dbReference type="ChEBI" id="CHEBI:15378"/>
        <dbReference type="ChEBI" id="CHEBI:29242"/>
        <dbReference type="ChEBI" id="CHEBI:29950"/>
        <dbReference type="ChEBI" id="CHEBI:48597"/>
        <dbReference type="ChEBI" id="CHEBI:57925"/>
        <dbReference type="ChEBI" id="CHEBI:146199"/>
        <dbReference type="EC" id="1.20.4.1"/>
    </reaction>
</comment>
<comment type="biophysicochemical properties">
    <kinetics>
        <KM evidence="2">9.2 mM for arsenate</KM>
        <Vmax evidence="2">55.0 nmol/min/mg enzyme towards arsenate</Vmax>
    </kinetics>
</comment>
<comment type="induction">
    <text evidence="2">By arsenate.</text>
</comment>
<comment type="sequence caution" evidence="3">
    <conflict type="erroneous gene model prediction">
        <sequence resource="EMBL-CDS" id="AAN62781"/>
    </conflict>
</comment>
<evidence type="ECO:0000255" key="1">
    <source>
        <dbReference type="PROSITE-ProRule" id="PRU00173"/>
    </source>
</evidence>
<evidence type="ECO:0000269" key="2">
    <source>
    </source>
</evidence>
<evidence type="ECO:0000305" key="3"/>
<name>ACR22_ORYSJ</name>
<reference key="1">
    <citation type="journal article" date="2007" name="New Phytol.">
        <title>A CDC25 homologue from rice functions as an arsenate reductase.</title>
        <authorList>
            <person name="Duan G.L."/>
            <person name="Zhou Y."/>
            <person name="Tong Y.P."/>
            <person name="Mukhopadhyay R."/>
            <person name="Rosen B.P."/>
            <person name="Zhu Y.G."/>
        </authorList>
    </citation>
    <scope>NUCLEOTIDE SEQUENCE [MRNA]</scope>
    <scope>FUNCTION</scope>
    <scope>CATALYTIC ACTIVITY</scope>
    <scope>BIOPHYSICOCHEMICAL PROPERTIES</scope>
    <scope>INDUCTION</scope>
    <scope>MUTAGENESIS OF CYS-70</scope>
    <source>
        <tissue>Shoot</tissue>
    </source>
</reference>
<reference key="2">
    <citation type="journal article" date="2005" name="Genome Res.">
        <title>Sequence, annotation, and analysis of synteny between rice chromosome 3 and diverged grass species.</title>
        <authorList>
            <consortium name="The rice chromosome 3 sequencing consortium"/>
            <person name="Buell C.R."/>
            <person name="Yuan Q."/>
            <person name="Ouyang S."/>
            <person name="Liu J."/>
            <person name="Zhu W."/>
            <person name="Wang A."/>
            <person name="Maiti R."/>
            <person name="Haas B."/>
            <person name="Wortman J."/>
            <person name="Pertea M."/>
            <person name="Jones K.M."/>
            <person name="Kim M."/>
            <person name="Overton L."/>
            <person name="Tsitrin T."/>
            <person name="Fadrosh D."/>
            <person name="Bera J."/>
            <person name="Weaver B."/>
            <person name="Jin S."/>
            <person name="Johri S."/>
            <person name="Reardon M."/>
            <person name="Webb K."/>
            <person name="Hill J."/>
            <person name="Moffat K."/>
            <person name="Tallon L."/>
            <person name="Van Aken S."/>
            <person name="Lewis M."/>
            <person name="Utterback T."/>
            <person name="Feldblyum T."/>
            <person name="Zismann V."/>
            <person name="Iobst S."/>
            <person name="Hsiao J."/>
            <person name="de Vazeille A.R."/>
            <person name="Salzberg S.L."/>
            <person name="White O."/>
            <person name="Fraser C.M."/>
            <person name="Yu Y."/>
            <person name="Kim H."/>
            <person name="Rambo T."/>
            <person name="Currie J."/>
            <person name="Collura K."/>
            <person name="Kernodle-Thompson S."/>
            <person name="Wei F."/>
            <person name="Kudrna K."/>
            <person name="Ammiraju J.S.S."/>
            <person name="Luo M."/>
            <person name="Goicoechea J.L."/>
            <person name="Wing R.A."/>
            <person name="Henry D."/>
            <person name="Oates R."/>
            <person name="Palmer M."/>
            <person name="Pries G."/>
            <person name="Saski C."/>
            <person name="Simmons J."/>
            <person name="Soderlund C."/>
            <person name="Nelson W."/>
            <person name="de la Bastide M."/>
            <person name="Spiegel L."/>
            <person name="Nascimento L."/>
            <person name="Huang E."/>
            <person name="Preston R."/>
            <person name="Zutavern T."/>
            <person name="Palmer L."/>
            <person name="O'Shaughnessy A."/>
            <person name="Dike S."/>
            <person name="McCombie W.R."/>
            <person name="Minx P."/>
            <person name="Cordum H."/>
            <person name="Wilson R."/>
            <person name="Jin W."/>
            <person name="Lee H.R."/>
            <person name="Jiang J."/>
            <person name="Jackson S."/>
        </authorList>
    </citation>
    <scope>NUCLEOTIDE SEQUENCE [LARGE SCALE GENOMIC DNA]</scope>
    <source>
        <strain>cv. Nipponbare</strain>
        <tissue>Shoot</tissue>
    </source>
</reference>
<reference key="3">
    <citation type="journal article" date="2005" name="Nature">
        <title>The map-based sequence of the rice genome.</title>
        <authorList>
            <consortium name="International rice genome sequencing project (IRGSP)"/>
        </authorList>
    </citation>
    <scope>NUCLEOTIDE SEQUENCE [LARGE SCALE GENOMIC DNA]</scope>
    <source>
        <strain>cv. Nipponbare</strain>
    </source>
</reference>
<reference key="4">
    <citation type="journal article" date="2008" name="Nucleic Acids Res.">
        <title>The rice annotation project database (RAP-DB): 2008 update.</title>
        <authorList>
            <consortium name="The rice annotation project (RAP)"/>
        </authorList>
    </citation>
    <scope>GENOME REANNOTATION</scope>
    <source>
        <strain>cv. Nipponbare</strain>
    </source>
</reference>
<reference key="5">
    <citation type="journal article" date="2013" name="Rice">
        <title>Improvement of the Oryza sativa Nipponbare reference genome using next generation sequence and optical map data.</title>
        <authorList>
            <person name="Kawahara Y."/>
            <person name="de la Bastide M."/>
            <person name="Hamilton J.P."/>
            <person name="Kanamori H."/>
            <person name="McCombie W.R."/>
            <person name="Ouyang S."/>
            <person name="Schwartz D.C."/>
            <person name="Tanaka T."/>
            <person name="Wu J."/>
            <person name="Zhou S."/>
            <person name="Childs K.L."/>
            <person name="Davidson R.M."/>
            <person name="Lin H."/>
            <person name="Quesada-Ocampo L."/>
            <person name="Vaillancourt B."/>
            <person name="Sakai H."/>
            <person name="Lee S.S."/>
            <person name="Kim J."/>
            <person name="Numa H."/>
            <person name="Itoh T."/>
            <person name="Buell C.R."/>
            <person name="Matsumoto T."/>
        </authorList>
    </citation>
    <scope>GENOME REANNOTATION</scope>
    <source>
        <strain>cv. Nipponbare</strain>
    </source>
</reference>
<reference key="6">
    <citation type="journal article" date="2003" name="Science">
        <title>Collection, mapping, and annotation of over 28,000 cDNA clones from japonica rice.</title>
        <authorList>
            <consortium name="The rice full-length cDNA consortium"/>
        </authorList>
    </citation>
    <scope>NUCLEOTIDE SEQUENCE [LARGE SCALE MRNA]</scope>
    <source>
        <strain>cv. Nipponbare</strain>
    </source>
</reference>
<reference key="7">
    <citation type="journal article" date="2011" name="Plant Physiol. Biochem.">
        <title>Characterization of the sulfurtransferase family from Oryza sativa L.</title>
        <authorList>
            <person name="Guretzki S."/>
            <person name="Papenbrock J."/>
        </authorList>
    </citation>
    <scope>GENE FAMILY</scope>
    <scope>NOMENCLATURE</scope>
</reference>
<gene>
    <name type="primary">ACR2.2</name>
    <name type="synonym">CDC25.2</name>
    <name type="synonym">STR21</name>
    <name type="ordered locus">Os03g0108000</name>
    <name type="ordered locus">LOC_Os03g01770</name>
</gene>